<protein>
    <recommendedName>
        <fullName evidence="1">HPr kinase/phosphorylase</fullName>
        <shortName evidence="1">HPrK/P</shortName>
        <ecNumber evidence="1">2.7.11.-</ecNumber>
        <ecNumber evidence="1">2.7.4.-</ecNumber>
    </recommendedName>
    <alternativeName>
        <fullName evidence="1">HPr(Ser) kinase/phosphorylase</fullName>
    </alternativeName>
</protein>
<keyword id="KW-0067">ATP-binding</keyword>
<keyword id="KW-0119">Carbohydrate metabolism</keyword>
<keyword id="KW-0418">Kinase</keyword>
<keyword id="KW-0460">Magnesium</keyword>
<keyword id="KW-0479">Metal-binding</keyword>
<keyword id="KW-0511">Multifunctional enzyme</keyword>
<keyword id="KW-0547">Nucleotide-binding</keyword>
<keyword id="KW-0723">Serine/threonine-protein kinase</keyword>
<keyword id="KW-0808">Transferase</keyword>
<dbReference type="EC" id="2.7.11.-" evidence="1"/>
<dbReference type="EC" id="2.7.4.-" evidence="1"/>
<dbReference type="EMBL" id="CP000419">
    <property type="protein sequence ID" value="ABJ65975.1"/>
    <property type="molecule type" value="Genomic_DNA"/>
</dbReference>
<dbReference type="RefSeq" id="WP_011680964.1">
    <property type="nucleotide sequence ID" value="NC_008532.1"/>
</dbReference>
<dbReference type="SMR" id="Q03LE7"/>
<dbReference type="KEGG" id="ste:STER_0719"/>
<dbReference type="HOGENOM" id="CLU_052030_0_1_9"/>
<dbReference type="GO" id="GO:0005524">
    <property type="term" value="F:ATP binding"/>
    <property type="evidence" value="ECO:0007669"/>
    <property type="project" value="UniProtKB-UniRule"/>
</dbReference>
<dbReference type="GO" id="GO:0000287">
    <property type="term" value="F:magnesium ion binding"/>
    <property type="evidence" value="ECO:0007669"/>
    <property type="project" value="UniProtKB-UniRule"/>
</dbReference>
<dbReference type="GO" id="GO:0000155">
    <property type="term" value="F:phosphorelay sensor kinase activity"/>
    <property type="evidence" value="ECO:0007669"/>
    <property type="project" value="InterPro"/>
</dbReference>
<dbReference type="GO" id="GO:0004674">
    <property type="term" value="F:protein serine/threonine kinase activity"/>
    <property type="evidence" value="ECO:0007669"/>
    <property type="project" value="UniProtKB-KW"/>
</dbReference>
<dbReference type="GO" id="GO:0004712">
    <property type="term" value="F:protein serine/threonine/tyrosine kinase activity"/>
    <property type="evidence" value="ECO:0007669"/>
    <property type="project" value="UniProtKB-UniRule"/>
</dbReference>
<dbReference type="GO" id="GO:0006109">
    <property type="term" value="P:regulation of carbohydrate metabolic process"/>
    <property type="evidence" value="ECO:0007669"/>
    <property type="project" value="UniProtKB-UniRule"/>
</dbReference>
<dbReference type="CDD" id="cd01918">
    <property type="entry name" value="HprK_C"/>
    <property type="match status" value="1"/>
</dbReference>
<dbReference type="FunFam" id="3.40.50.300:FF:000174">
    <property type="entry name" value="HPr kinase/phosphorylase"/>
    <property type="match status" value="1"/>
</dbReference>
<dbReference type="Gene3D" id="3.40.1390.20">
    <property type="entry name" value="HprK N-terminal domain-like"/>
    <property type="match status" value="1"/>
</dbReference>
<dbReference type="Gene3D" id="3.40.50.300">
    <property type="entry name" value="P-loop containing nucleotide triphosphate hydrolases"/>
    <property type="match status" value="1"/>
</dbReference>
<dbReference type="HAMAP" id="MF_01249">
    <property type="entry name" value="HPr_kinase"/>
    <property type="match status" value="1"/>
</dbReference>
<dbReference type="InterPro" id="IPR003755">
    <property type="entry name" value="HPr(Ser)_kin/Pase"/>
</dbReference>
<dbReference type="InterPro" id="IPR011104">
    <property type="entry name" value="Hpr_kin/Pase_C"/>
</dbReference>
<dbReference type="InterPro" id="IPR011126">
    <property type="entry name" value="Hpr_kin/Pase_Hpr_N"/>
</dbReference>
<dbReference type="InterPro" id="IPR027417">
    <property type="entry name" value="P-loop_NTPase"/>
</dbReference>
<dbReference type="InterPro" id="IPR028979">
    <property type="entry name" value="Ser_kin/Pase_Hpr-like_N_sf"/>
</dbReference>
<dbReference type="NCBIfam" id="TIGR00679">
    <property type="entry name" value="hpr-ser"/>
    <property type="match status" value="1"/>
</dbReference>
<dbReference type="PANTHER" id="PTHR30305:SF1">
    <property type="entry name" value="HPR KINASE_PHOSPHORYLASE"/>
    <property type="match status" value="1"/>
</dbReference>
<dbReference type="PANTHER" id="PTHR30305">
    <property type="entry name" value="PROTEIN YJDM-RELATED"/>
    <property type="match status" value="1"/>
</dbReference>
<dbReference type="Pfam" id="PF07475">
    <property type="entry name" value="Hpr_kinase_C"/>
    <property type="match status" value="1"/>
</dbReference>
<dbReference type="Pfam" id="PF02603">
    <property type="entry name" value="Hpr_kinase_N"/>
    <property type="match status" value="1"/>
</dbReference>
<dbReference type="SUPFAM" id="SSF75138">
    <property type="entry name" value="HprK N-terminal domain-like"/>
    <property type="match status" value="1"/>
</dbReference>
<dbReference type="SUPFAM" id="SSF53795">
    <property type="entry name" value="PEP carboxykinase-like"/>
    <property type="match status" value="1"/>
</dbReference>
<proteinExistence type="inferred from homology"/>
<comment type="function">
    <text evidence="1">Catalyzes the ATP- as well as the pyrophosphate-dependent phosphorylation of a specific serine residue in HPr, a phosphocarrier protein of the phosphoenolpyruvate-dependent sugar phosphotransferase system (PTS). HprK/P also catalyzes the pyrophosphate-producing, inorganic phosphate-dependent dephosphorylation (phosphorolysis) of seryl-phosphorylated HPr (P-Ser-HPr). The two antagonistic activities of HprK/P are regulated by several intracellular metabolites, which change their concentration in response to the absence or presence of rapidly metabolisable carbon sources (glucose, fructose, etc.) in the growth medium. Therefore, by controlling the phosphorylation state of HPr, HPrK/P is a sensor enzyme that plays a major role in the regulation of carbon metabolism and sugar transport: it mediates carbon catabolite repression (CCR), and regulates PTS-catalyzed carbohydrate uptake and inducer exclusion.</text>
</comment>
<comment type="catalytic activity">
    <reaction evidence="1">
        <text>[HPr protein]-L-serine + ATP = [HPr protein]-O-phospho-L-serine + ADP + H(+)</text>
        <dbReference type="Rhea" id="RHEA:46600"/>
        <dbReference type="Rhea" id="RHEA-COMP:11602"/>
        <dbReference type="Rhea" id="RHEA-COMP:11603"/>
        <dbReference type="ChEBI" id="CHEBI:15378"/>
        <dbReference type="ChEBI" id="CHEBI:29999"/>
        <dbReference type="ChEBI" id="CHEBI:30616"/>
        <dbReference type="ChEBI" id="CHEBI:83421"/>
        <dbReference type="ChEBI" id="CHEBI:456216"/>
    </reaction>
</comment>
<comment type="catalytic activity">
    <reaction evidence="1">
        <text>[HPr protein]-O-phospho-L-serine + phosphate + H(+) = [HPr protein]-L-serine + diphosphate</text>
        <dbReference type="Rhea" id="RHEA:46604"/>
        <dbReference type="Rhea" id="RHEA-COMP:11602"/>
        <dbReference type="Rhea" id="RHEA-COMP:11603"/>
        <dbReference type="ChEBI" id="CHEBI:15378"/>
        <dbReference type="ChEBI" id="CHEBI:29999"/>
        <dbReference type="ChEBI" id="CHEBI:33019"/>
        <dbReference type="ChEBI" id="CHEBI:43474"/>
        <dbReference type="ChEBI" id="CHEBI:83421"/>
    </reaction>
</comment>
<comment type="cofactor">
    <cofactor evidence="1">
        <name>Mg(2+)</name>
        <dbReference type="ChEBI" id="CHEBI:18420"/>
    </cofactor>
</comment>
<comment type="subunit">
    <text evidence="1">Homohexamer.</text>
</comment>
<comment type="domain">
    <text evidence="1">The Walker A ATP-binding motif also binds Pi and PPi.</text>
</comment>
<comment type="miscellaneous">
    <text evidence="1">Both phosphorylation and phosphorolysis are carried out by the same active site and suggest a common mechanism for both reactions.</text>
</comment>
<comment type="similarity">
    <text evidence="1">Belongs to the HPrK/P family.</text>
</comment>
<gene>
    <name evidence="1" type="primary">hprK</name>
    <name type="ordered locus">STER_0719</name>
</gene>
<reference key="1">
    <citation type="journal article" date="2006" name="Proc. Natl. Acad. Sci. U.S.A.">
        <title>Comparative genomics of the lactic acid bacteria.</title>
        <authorList>
            <person name="Makarova K.S."/>
            <person name="Slesarev A."/>
            <person name="Wolf Y.I."/>
            <person name="Sorokin A."/>
            <person name="Mirkin B."/>
            <person name="Koonin E.V."/>
            <person name="Pavlov A."/>
            <person name="Pavlova N."/>
            <person name="Karamychev V."/>
            <person name="Polouchine N."/>
            <person name="Shakhova V."/>
            <person name="Grigoriev I."/>
            <person name="Lou Y."/>
            <person name="Rohksar D."/>
            <person name="Lucas S."/>
            <person name="Huang K."/>
            <person name="Goodstein D.M."/>
            <person name="Hawkins T."/>
            <person name="Plengvidhya V."/>
            <person name="Welker D."/>
            <person name="Hughes J."/>
            <person name="Goh Y."/>
            <person name="Benson A."/>
            <person name="Baldwin K."/>
            <person name="Lee J.-H."/>
            <person name="Diaz-Muniz I."/>
            <person name="Dosti B."/>
            <person name="Smeianov V."/>
            <person name="Wechter W."/>
            <person name="Barabote R."/>
            <person name="Lorca G."/>
            <person name="Altermann E."/>
            <person name="Barrangou R."/>
            <person name="Ganesan B."/>
            <person name="Xie Y."/>
            <person name="Rawsthorne H."/>
            <person name="Tamir D."/>
            <person name="Parker C."/>
            <person name="Breidt F."/>
            <person name="Broadbent J.R."/>
            <person name="Hutkins R."/>
            <person name="O'Sullivan D."/>
            <person name="Steele J."/>
            <person name="Unlu G."/>
            <person name="Saier M.H. Jr."/>
            <person name="Klaenhammer T."/>
            <person name="Richardson P."/>
            <person name="Kozyavkin S."/>
            <person name="Weimer B.C."/>
            <person name="Mills D.A."/>
        </authorList>
    </citation>
    <scope>NUCLEOTIDE SEQUENCE [LARGE SCALE GENOMIC DNA]</scope>
    <source>
        <strain>ATCC BAA-491 / LMD-9</strain>
    </source>
</reference>
<organism>
    <name type="scientific">Streptococcus thermophilus (strain ATCC BAA-491 / LMD-9)</name>
    <dbReference type="NCBI Taxonomy" id="322159"/>
    <lineage>
        <taxon>Bacteria</taxon>
        <taxon>Bacillati</taxon>
        <taxon>Bacillota</taxon>
        <taxon>Bacilli</taxon>
        <taxon>Lactobacillales</taxon>
        <taxon>Streptococcaceae</taxon>
        <taxon>Streptococcus</taxon>
    </lineage>
</organism>
<evidence type="ECO:0000255" key="1">
    <source>
        <dbReference type="HAMAP-Rule" id="MF_01249"/>
    </source>
</evidence>
<sequence>MTVTVKMLVDKLKLKVVYGNEELLAKAITTADISRPGLEMTGYFDYYSPERLQLVGMKEWSYLKTMTANNRYSVFANIFREETPAVVVARGLEIPEEMLQAAKENGVAVLQGRNSTSSLSGDMSWYLNSQLAERTSVHGVLVDIYGMGVLIQGDSGIGKSETALELVKRGHRLVADDRVDVYAKDEGTLWGEPAEILLHLLEIRGVGIIDVMSLYGASAVRDSSQVQLCICLEHFENDEVFDRLGNSNEEIELQGVKIPRIRIPVKTGRNVSVVIEAAAMNYRAKQMGYDATKTFKDRLTDLISKNGED</sequence>
<accession>Q03LE7</accession>
<name>HPRK_STRTD</name>
<feature type="chain" id="PRO_1000067180" description="HPr kinase/phosphorylase">
    <location>
        <begin position="1"/>
        <end position="309"/>
    </location>
</feature>
<feature type="region of interest" description="Important for the catalytic mechanism of both phosphorylation and dephosphorylation" evidence="1">
    <location>
        <begin position="201"/>
        <end position="210"/>
    </location>
</feature>
<feature type="region of interest" description="Important for the catalytic mechanism of dephosphorylation" evidence="1">
    <location>
        <begin position="264"/>
        <end position="269"/>
    </location>
</feature>
<feature type="active site" evidence="1">
    <location>
        <position position="138"/>
    </location>
</feature>
<feature type="active site" evidence="1">
    <location>
        <position position="159"/>
    </location>
</feature>
<feature type="active site" description="Proton acceptor; for phosphorylation activity. Proton donor; for dephosphorylation activity" evidence="1">
    <location>
        <position position="177"/>
    </location>
</feature>
<feature type="active site" evidence="1">
    <location>
        <position position="243"/>
    </location>
</feature>
<feature type="binding site" evidence="1">
    <location>
        <begin position="153"/>
        <end position="160"/>
    </location>
    <ligand>
        <name>ATP</name>
        <dbReference type="ChEBI" id="CHEBI:30616"/>
    </ligand>
</feature>
<feature type="binding site" evidence="1">
    <location>
        <position position="160"/>
    </location>
    <ligand>
        <name>Mg(2+)</name>
        <dbReference type="ChEBI" id="CHEBI:18420"/>
    </ligand>
</feature>
<feature type="binding site" evidence="1">
    <location>
        <position position="202"/>
    </location>
    <ligand>
        <name>Mg(2+)</name>
        <dbReference type="ChEBI" id="CHEBI:18420"/>
    </ligand>
</feature>